<accession>O69251</accession>
<proteinExistence type="inferred from homology"/>
<comment type="function">
    <text evidence="1">General (non sugar-specific) component of the phosphoenolpyruvate-dependent sugar phosphotransferase system (sugar PTS). This major carbohydrate active-transport system catalyzes the phosphorylation of incoming sugar substrates concomitantly with their translocation across the cell membrane. Enzyme I transfers the phosphoryl group from phosphoenolpyruvate (PEP) to the phosphoryl carrier protein (HPr).</text>
</comment>
<comment type="catalytic activity">
    <reaction evidence="1">
        <text>L-histidyl-[protein] + phosphoenolpyruvate = N(pros)-phospho-L-histidyl-[protein] + pyruvate</text>
        <dbReference type="Rhea" id="RHEA:23880"/>
        <dbReference type="Rhea" id="RHEA-COMP:9745"/>
        <dbReference type="Rhea" id="RHEA-COMP:9746"/>
        <dbReference type="ChEBI" id="CHEBI:15361"/>
        <dbReference type="ChEBI" id="CHEBI:29979"/>
        <dbReference type="ChEBI" id="CHEBI:58702"/>
        <dbReference type="ChEBI" id="CHEBI:64837"/>
        <dbReference type="EC" id="2.7.3.9"/>
    </reaction>
</comment>
<comment type="cofactor">
    <cofactor evidence="1">
        <name>Mg(2+)</name>
        <dbReference type="ChEBI" id="CHEBI:18420"/>
    </cofactor>
</comment>
<comment type="subunit">
    <text evidence="1">Homodimer.</text>
</comment>
<comment type="subcellular location">
    <subcellularLocation>
        <location evidence="3">Cytoplasm</location>
    </subcellularLocation>
</comment>
<comment type="domain">
    <text evidence="1">The N-terminal domain contains the HPr binding site, the central domain the pyrophosphate/phosphate carrier histidine, and the C-terminal domain the pyruvate binding site.</text>
</comment>
<comment type="miscellaneous">
    <text evidence="1">The reaction takes place in three steps, mediated by a phosphocarrier histidine residue located on the surface of the central domain. The two first partial reactions are catalyzed at an active site located on the N-terminal domain, and the third partial reaction is catalyzed at an active site located on the C-terminal domain. For catalytic turnover, the central domain swivels from the concave surface of the N-terminal domain to that of the C-terminal domain.</text>
</comment>
<comment type="similarity">
    <text evidence="3">Belongs to the PEP-utilizing enzyme family.</text>
</comment>
<protein>
    <recommendedName>
        <fullName evidence="1">Phosphoenolpyruvate-protein phosphotransferase</fullName>
        <ecNumber evidence="1">2.7.3.9</ecNumber>
    </recommendedName>
    <alternativeName>
        <fullName evidence="1">Phosphotransferase system, enzyme I</fullName>
    </alternativeName>
</protein>
<organism>
    <name type="scientific">Priestia megaterium</name>
    <name type="common">Bacillus megaterium</name>
    <dbReference type="NCBI Taxonomy" id="1404"/>
    <lineage>
        <taxon>Bacteria</taxon>
        <taxon>Bacillati</taxon>
        <taxon>Bacillota</taxon>
        <taxon>Bacilli</taxon>
        <taxon>Bacillales</taxon>
        <taxon>Bacillaceae</taxon>
        <taxon>Priestia</taxon>
    </lineage>
</organism>
<sequence>MTKEIQGIAASSGIAIAKAFRLENPELTVEKKSVTEVEAEVARLEAALEKSKSELEIIREHARKELGDDKAEIFEAHLLVLSDPELINPIKDKITNENVNAEHALDEVAAMFINMFESMDNEYMKERAADIRDVTKRVLAHLLGVNVSNPSLISEEVVIIAEDLTPSDTAQLNRKFVKGFTTDIGGRTSHSAIMARSMEIPAVVGTKTVMEDIQNGVLVIVDGLDGEVIVDPSEETVKAYEKKAAEYAEQKAEWAKLVNEKTVSADDHHVELAANIGTPEDVKGVLENGGEGVGLYRTEFLYMGREDLPTEEEQFTSYKTVLERMEGKPVVVRTLDIGGDKELPYLNLPKEMNPFLGFRAIRLCLEMQDMFRTQLRALLRASVYGNLKIMFPMIATVDEFRQAKAILLEEKAKLQQEGVQVSEDIEVGMMVEIPSSAVIADLFAKEVDFFSIGTNDLIQYTLAADRMNERVSYLYQPYNPAILRLVNMVIKAAHKEGKWVGMCGEMAGDEIAIPILLGLGLDEFSMSATSILKARSQIRQLSKADIEPHLDTILSMSSTEEVIEFVKSTFHIG</sequence>
<name>PT1_PRIMG</name>
<feature type="chain" id="PRO_0000147055" description="Phosphoenolpyruvate-protein phosphotransferase">
    <location>
        <begin position="1"/>
        <end position="573"/>
    </location>
</feature>
<feature type="active site" description="Tele-phosphohistidine intermediate" evidence="1">
    <location>
        <position position="190"/>
    </location>
</feature>
<feature type="active site" description="Proton donor" evidence="1">
    <location>
        <position position="503"/>
    </location>
</feature>
<feature type="binding site" evidence="2">
    <location>
        <position position="297"/>
    </location>
    <ligand>
        <name>phosphoenolpyruvate</name>
        <dbReference type="ChEBI" id="CHEBI:58702"/>
    </ligand>
</feature>
<feature type="binding site" evidence="1">
    <location>
        <position position="333"/>
    </location>
    <ligand>
        <name>phosphoenolpyruvate</name>
        <dbReference type="ChEBI" id="CHEBI:58702"/>
    </ligand>
</feature>
<feature type="binding site" evidence="1">
    <location>
        <position position="432"/>
    </location>
    <ligand>
        <name>Mg(2+)</name>
        <dbReference type="ChEBI" id="CHEBI:18420"/>
    </ligand>
</feature>
<feature type="binding site" evidence="1">
    <location>
        <begin position="455"/>
        <end position="456"/>
    </location>
    <ligand>
        <name>phosphoenolpyruvate</name>
        <dbReference type="ChEBI" id="CHEBI:58702"/>
    </ligand>
</feature>
<feature type="binding site" evidence="1">
    <location>
        <position position="456"/>
    </location>
    <ligand>
        <name>Mg(2+)</name>
        <dbReference type="ChEBI" id="CHEBI:18420"/>
    </ligand>
</feature>
<feature type="binding site" evidence="2">
    <location>
        <position position="466"/>
    </location>
    <ligand>
        <name>phosphoenolpyruvate</name>
        <dbReference type="ChEBI" id="CHEBI:58702"/>
    </ligand>
</feature>
<dbReference type="EC" id="2.7.3.9" evidence="1"/>
<dbReference type="EMBL" id="AJ005075">
    <property type="protein sequence ID" value="CAA06332.1"/>
    <property type="molecule type" value="Genomic_DNA"/>
</dbReference>
<dbReference type="SMR" id="O69251"/>
<dbReference type="GO" id="GO:0005737">
    <property type="term" value="C:cytoplasm"/>
    <property type="evidence" value="ECO:0007669"/>
    <property type="project" value="UniProtKB-SubCell"/>
</dbReference>
<dbReference type="GO" id="GO:0016301">
    <property type="term" value="F:kinase activity"/>
    <property type="evidence" value="ECO:0007669"/>
    <property type="project" value="UniProtKB-KW"/>
</dbReference>
<dbReference type="GO" id="GO:0046872">
    <property type="term" value="F:metal ion binding"/>
    <property type="evidence" value="ECO:0007669"/>
    <property type="project" value="UniProtKB-KW"/>
</dbReference>
<dbReference type="GO" id="GO:0008965">
    <property type="term" value="F:phosphoenolpyruvate-protein phosphotransferase activity"/>
    <property type="evidence" value="ECO:0007669"/>
    <property type="project" value="UniProtKB-EC"/>
</dbReference>
<dbReference type="GO" id="GO:0009401">
    <property type="term" value="P:phosphoenolpyruvate-dependent sugar phosphotransferase system"/>
    <property type="evidence" value="ECO:0007669"/>
    <property type="project" value="UniProtKB-KW"/>
</dbReference>
<dbReference type="FunFam" id="1.10.274.10:FF:000001">
    <property type="entry name" value="Phosphoenolpyruvate-protein phosphotransferase"/>
    <property type="match status" value="1"/>
</dbReference>
<dbReference type="FunFam" id="3.20.20.60:FF:000007">
    <property type="entry name" value="Phosphoenolpyruvate-protein phosphotransferase"/>
    <property type="match status" value="1"/>
</dbReference>
<dbReference type="Gene3D" id="3.20.20.60">
    <property type="entry name" value="Phosphoenolpyruvate-binding domains"/>
    <property type="match status" value="1"/>
</dbReference>
<dbReference type="Gene3D" id="3.50.30.10">
    <property type="entry name" value="Phosphohistidine domain"/>
    <property type="match status" value="1"/>
</dbReference>
<dbReference type="Gene3D" id="1.10.274.10">
    <property type="entry name" value="PtsI, HPr-binding domain"/>
    <property type="match status" value="1"/>
</dbReference>
<dbReference type="InterPro" id="IPR008279">
    <property type="entry name" value="PEP-util_enz_mobile_dom"/>
</dbReference>
<dbReference type="InterPro" id="IPR050499">
    <property type="entry name" value="PEP-utilizing_PTS_enzyme"/>
</dbReference>
<dbReference type="InterPro" id="IPR018274">
    <property type="entry name" value="PEP_util_AS"/>
</dbReference>
<dbReference type="InterPro" id="IPR000121">
    <property type="entry name" value="PEP_util_C"/>
</dbReference>
<dbReference type="InterPro" id="IPR023151">
    <property type="entry name" value="PEP_util_CS"/>
</dbReference>
<dbReference type="InterPro" id="IPR036637">
    <property type="entry name" value="Phosphohistidine_dom_sf"/>
</dbReference>
<dbReference type="InterPro" id="IPR024692">
    <property type="entry name" value="PTS_EI"/>
</dbReference>
<dbReference type="InterPro" id="IPR006318">
    <property type="entry name" value="PTS_EI-like"/>
</dbReference>
<dbReference type="InterPro" id="IPR008731">
    <property type="entry name" value="PTS_EIN"/>
</dbReference>
<dbReference type="InterPro" id="IPR036618">
    <property type="entry name" value="PtsI_HPr-bd_sf"/>
</dbReference>
<dbReference type="InterPro" id="IPR015813">
    <property type="entry name" value="Pyrv/PenolPyrv_kinase-like_dom"/>
</dbReference>
<dbReference type="InterPro" id="IPR040442">
    <property type="entry name" value="Pyrv_kinase-like_dom_sf"/>
</dbReference>
<dbReference type="NCBIfam" id="TIGR01417">
    <property type="entry name" value="PTS_I_fam"/>
    <property type="match status" value="1"/>
</dbReference>
<dbReference type="PANTHER" id="PTHR46244">
    <property type="entry name" value="PHOSPHOENOLPYRUVATE-PROTEIN PHOSPHOTRANSFERASE"/>
    <property type="match status" value="1"/>
</dbReference>
<dbReference type="PANTHER" id="PTHR46244:SF3">
    <property type="entry name" value="PHOSPHOENOLPYRUVATE-PROTEIN PHOSPHOTRANSFERASE"/>
    <property type="match status" value="1"/>
</dbReference>
<dbReference type="Pfam" id="PF05524">
    <property type="entry name" value="PEP-utilisers_N"/>
    <property type="match status" value="1"/>
</dbReference>
<dbReference type="Pfam" id="PF00391">
    <property type="entry name" value="PEP-utilizers"/>
    <property type="match status" value="1"/>
</dbReference>
<dbReference type="Pfam" id="PF02896">
    <property type="entry name" value="PEP-utilizers_C"/>
    <property type="match status" value="1"/>
</dbReference>
<dbReference type="PIRSF" id="PIRSF000732">
    <property type="entry name" value="PTS_enzyme_I"/>
    <property type="match status" value="1"/>
</dbReference>
<dbReference type="PRINTS" id="PR01736">
    <property type="entry name" value="PHPHTRNFRASE"/>
</dbReference>
<dbReference type="SUPFAM" id="SSF47831">
    <property type="entry name" value="Enzyme I of the PEP:sugar phosphotransferase system HPr-binding (sub)domain"/>
    <property type="match status" value="1"/>
</dbReference>
<dbReference type="SUPFAM" id="SSF51621">
    <property type="entry name" value="Phosphoenolpyruvate/pyruvate domain"/>
    <property type="match status" value="1"/>
</dbReference>
<dbReference type="SUPFAM" id="SSF52009">
    <property type="entry name" value="Phosphohistidine domain"/>
    <property type="match status" value="1"/>
</dbReference>
<dbReference type="PROSITE" id="PS00742">
    <property type="entry name" value="PEP_ENZYMES_2"/>
    <property type="match status" value="1"/>
</dbReference>
<dbReference type="PROSITE" id="PS00370">
    <property type="entry name" value="PEP_ENZYMES_PHOS_SITE"/>
    <property type="match status" value="1"/>
</dbReference>
<gene>
    <name type="primary">ptsI</name>
</gene>
<evidence type="ECO:0000250" key="1">
    <source>
        <dbReference type="UniProtKB" id="P08839"/>
    </source>
</evidence>
<evidence type="ECO:0000250" key="2">
    <source>
        <dbReference type="UniProtKB" id="P23533"/>
    </source>
</evidence>
<evidence type="ECO:0000305" key="3"/>
<keyword id="KW-0963">Cytoplasm</keyword>
<keyword id="KW-0418">Kinase</keyword>
<keyword id="KW-0460">Magnesium</keyword>
<keyword id="KW-0479">Metal-binding</keyword>
<keyword id="KW-0598">Phosphotransferase system</keyword>
<keyword id="KW-0762">Sugar transport</keyword>
<keyword id="KW-0808">Transferase</keyword>
<keyword id="KW-0813">Transport</keyword>
<reference key="1">
    <citation type="submission" date="1998-03" db="EMBL/GenBank/DDBJ databases">
        <title>Sequence of ptsH and ptsI of Bacillus megaterium.</title>
        <authorList>
            <person name="Wagner A."/>
            <person name="Kuester E."/>
            <person name="Hillen W."/>
        </authorList>
    </citation>
    <scope>NUCLEOTIDE SEQUENCE [GENOMIC DNA]</scope>
    <source>
        <strain>WH348</strain>
    </source>
</reference>